<name>ATPD_BRUSI</name>
<protein>
    <recommendedName>
        <fullName evidence="1">ATP synthase subunit delta</fullName>
    </recommendedName>
    <alternativeName>
        <fullName evidence="1">ATP synthase F(1) sector subunit delta</fullName>
    </alternativeName>
    <alternativeName>
        <fullName evidence="1">F-type ATPase subunit delta</fullName>
        <shortName evidence="1">F-ATPase subunit delta</shortName>
    </alternativeName>
</protein>
<organism>
    <name type="scientific">Brucella suis (strain ATCC 23445 / NCTC 10510)</name>
    <dbReference type="NCBI Taxonomy" id="470137"/>
    <lineage>
        <taxon>Bacteria</taxon>
        <taxon>Pseudomonadati</taxon>
        <taxon>Pseudomonadota</taxon>
        <taxon>Alphaproteobacteria</taxon>
        <taxon>Hyphomicrobiales</taxon>
        <taxon>Brucellaceae</taxon>
        <taxon>Brucella/Ochrobactrum group</taxon>
        <taxon>Brucella</taxon>
    </lineage>
</organism>
<reference key="1">
    <citation type="submission" date="2007-12" db="EMBL/GenBank/DDBJ databases">
        <title>Brucella suis ATCC 23445 whole genome shotgun sequencing project.</title>
        <authorList>
            <person name="Setubal J.C."/>
            <person name="Bowns C."/>
            <person name="Boyle S."/>
            <person name="Crasta O.R."/>
            <person name="Czar M.J."/>
            <person name="Dharmanolla C."/>
            <person name="Gillespie J.J."/>
            <person name="Kenyon R.W."/>
            <person name="Lu J."/>
            <person name="Mane S."/>
            <person name="Mohapatra S."/>
            <person name="Nagrani S."/>
            <person name="Purkayastha A."/>
            <person name="Rajasimha H.K."/>
            <person name="Shallom J.M."/>
            <person name="Shallom S."/>
            <person name="Shukla M."/>
            <person name="Snyder E.E."/>
            <person name="Sobral B.W."/>
            <person name="Wattam A.R."/>
            <person name="Will R."/>
            <person name="Williams K."/>
            <person name="Yoo H."/>
            <person name="Bruce D."/>
            <person name="Detter C."/>
            <person name="Munk C."/>
            <person name="Brettin T.S."/>
        </authorList>
    </citation>
    <scope>NUCLEOTIDE SEQUENCE [LARGE SCALE GENOMIC DNA]</scope>
    <source>
        <strain>ATCC 23445 / NCTC 10510</strain>
    </source>
</reference>
<dbReference type="EMBL" id="CP000912">
    <property type="protein sequence ID" value="ABY40211.1"/>
    <property type="molecule type" value="Genomic_DNA"/>
</dbReference>
<dbReference type="RefSeq" id="WP_004688721.1">
    <property type="nucleotide sequence ID" value="NC_010167.1"/>
</dbReference>
<dbReference type="SMR" id="A9WWS5"/>
<dbReference type="KEGG" id="bmt:BSUIS_B1278"/>
<dbReference type="HOGENOM" id="CLU_085114_0_1_5"/>
<dbReference type="Proteomes" id="UP000008545">
    <property type="component" value="Chromosome II"/>
</dbReference>
<dbReference type="GO" id="GO:0005886">
    <property type="term" value="C:plasma membrane"/>
    <property type="evidence" value="ECO:0007669"/>
    <property type="project" value="UniProtKB-SubCell"/>
</dbReference>
<dbReference type="GO" id="GO:0045259">
    <property type="term" value="C:proton-transporting ATP synthase complex"/>
    <property type="evidence" value="ECO:0007669"/>
    <property type="project" value="UniProtKB-KW"/>
</dbReference>
<dbReference type="GO" id="GO:0046933">
    <property type="term" value="F:proton-transporting ATP synthase activity, rotational mechanism"/>
    <property type="evidence" value="ECO:0007669"/>
    <property type="project" value="UniProtKB-UniRule"/>
</dbReference>
<dbReference type="Gene3D" id="1.10.520.20">
    <property type="entry name" value="N-terminal domain of the delta subunit of the F1F0-ATP synthase"/>
    <property type="match status" value="1"/>
</dbReference>
<dbReference type="HAMAP" id="MF_01416">
    <property type="entry name" value="ATP_synth_delta_bact"/>
    <property type="match status" value="1"/>
</dbReference>
<dbReference type="InterPro" id="IPR026015">
    <property type="entry name" value="ATP_synth_OSCP/delta_N_sf"/>
</dbReference>
<dbReference type="InterPro" id="IPR020781">
    <property type="entry name" value="ATPase_OSCP/d_CS"/>
</dbReference>
<dbReference type="InterPro" id="IPR000711">
    <property type="entry name" value="ATPase_OSCP/dsu"/>
</dbReference>
<dbReference type="NCBIfam" id="TIGR01145">
    <property type="entry name" value="ATP_synt_delta"/>
    <property type="match status" value="1"/>
</dbReference>
<dbReference type="NCBIfam" id="NF004402">
    <property type="entry name" value="PRK05758.2-2"/>
    <property type="match status" value="1"/>
</dbReference>
<dbReference type="NCBIfam" id="NF004406">
    <property type="entry name" value="PRK05758.3-2"/>
    <property type="match status" value="1"/>
</dbReference>
<dbReference type="PANTHER" id="PTHR11910">
    <property type="entry name" value="ATP SYNTHASE DELTA CHAIN"/>
    <property type="match status" value="1"/>
</dbReference>
<dbReference type="Pfam" id="PF00213">
    <property type="entry name" value="OSCP"/>
    <property type="match status" value="1"/>
</dbReference>
<dbReference type="PRINTS" id="PR00125">
    <property type="entry name" value="ATPASEDELTA"/>
</dbReference>
<dbReference type="SUPFAM" id="SSF47928">
    <property type="entry name" value="N-terminal domain of the delta subunit of the F1F0-ATP synthase"/>
    <property type="match status" value="1"/>
</dbReference>
<dbReference type="PROSITE" id="PS00389">
    <property type="entry name" value="ATPASE_DELTA"/>
    <property type="match status" value="1"/>
</dbReference>
<feature type="chain" id="PRO_0000370914" description="ATP synthase subunit delta">
    <location>
        <begin position="1"/>
        <end position="186"/>
    </location>
</feature>
<proteinExistence type="inferred from homology"/>
<keyword id="KW-0066">ATP synthesis</keyword>
<keyword id="KW-0997">Cell inner membrane</keyword>
<keyword id="KW-1003">Cell membrane</keyword>
<keyword id="KW-0139">CF(1)</keyword>
<keyword id="KW-0375">Hydrogen ion transport</keyword>
<keyword id="KW-0406">Ion transport</keyword>
<keyword id="KW-0472">Membrane</keyword>
<keyword id="KW-0813">Transport</keyword>
<comment type="function">
    <text evidence="1">F(1)F(0) ATP synthase produces ATP from ADP in the presence of a proton or sodium gradient. F-type ATPases consist of two structural domains, F(1) containing the extramembraneous catalytic core and F(0) containing the membrane proton channel, linked together by a central stalk and a peripheral stalk. During catalysis, ATP synthesis in the catalytic domain of F(1) is coupled via a rotary mechanism of the central stalk subunits to proton translocation.</text>
</comment>
<comment type="function">
    <text evidence="1">This protein is part of the stalk that links CF(0) to CF(1). It either transmits conformational changes from CF(0) to CF(1) or is implicated in proton conduction.</text>
</comment>
<comment type="subunit">
    <text evidence="1">F-type ATPases have 2 components, F(1) - the catalytic core - and F(0) - the membrane proton channel. F(1) has five subunits: alpha(3), beta(3), gamma(1), delta(1), epsilon(1). F(0) has three main subunits: a(1), b(2) and c(10-14). The alpha and beta chains form an alternating ring which encloses part of the gamma chain. F(1) is attached to F(0) by a central stalk formed by the gamma and epsilon chains, while a peripheral stalk is formed by the delta and b chains.</text>
</comment>
<comment type="subcellular location">
    <subcellularLocation>
        <location evidence="1">Cell inner membrane</location>
        <topology evidence="1">Peripheral membrane protein</topology>
    </subcellularLocation>
</comment>
<comment type="similarity">
    <text evidence="1">Belongs to the ATPase delta chain family.</text>
</comment>
<gene>
    <name evidence="1" type="primary">atpH</name>
    <name type="ordered locus">BSUIS_B1278</name>
</gene>
<accession>A9WWS5</accession>
<evidence type="ECO:0000255" key="1">
    <source>
        <dbReference type="HAMAP-Rule" id="MF_01416"/>
    </source>
</evidence>
<sequence>MAETSSLISGVAQRYAGSLFELALDANSVASVEKDLGRFEALLSGSEDLRRLISSPVFSSEDQLHAIGAIADKAGIKGLVGNFLRVVAQNRRLFALPGIIAAFRQIAAEHRGEISADVVSAHELTSAQQNELKATLKGVAGKDVTINVTVDPSILGGLIVKMGSRQIDTSLRTKLSSLKLALKEVG</sequence>